<keyword id="KW-0004">4Fe-4S</keyword>
<keyword id="KW-0963">Cytoplasm</keyword>
<keyword id="KW-0408">Iron</keyword>
<keyword id="KW-0411">Iron-sulfur</keyword>
<keyword id="KW-0479">Metal-binding</keyword>
<keyword id="KW-0949">S-adenosyl-L-methionine</keyword>
<keyword id="KW-0808">Transferase</keyword>
<organism>
    <name type="scientific">Bacillus velezensis (strain DSM 23117 / BGSC 10A6 / LMG 26770 / FZB42)</name>
    <name type="common">Bacillus amyloliquefaciens subsp. plantarum</name>
    <dbReference type="NCBI Taxonomy" id="326423"/>
    <lineage>
        <taxon>Bacteria</taxon>
        <taxon>Bacillati</taxon>
        <taxon>Bacillota</taxon>
        <taxon>Bacilli</taxon>
        <taxon>Bacillales</taxon>
        <taxon>Bacillaceae</taxon>
        <taxon>Bacillus</taxon>
        <taxon>Bacillus amyloliquefaciens group</taxon>
    </lineage>
</organism>
<evidence type="ECO:0000255" key="1">
    <source>
        <dbReference type="HAMAP-Rule" id="MF_00206"/>
    </source>
</evidence>
<evidence type="ECO:0000255" key="2">
    <source>
        <dbReference type="PROSITE-ProRule" id="PRU01266"/>
    </source>
</evidence>
<accession>A7Z8E8</accession>
<name>LIPA_BACVZ</name>
<dbReference type="EC" id="2.8.1.8" evidence="1"/>
<dbReference type="EMBL" id="CP000560">
    <property type="protein sequence ID" value="ABS75274.1"/>
    <property type="molecule type" value="Genomic_DNA"/>
</dbReference>
<dbReference type="RefSeq" id="WP_003151923.1">
    <property type="nucleotide sequence ID" value="NC_009725.2"/>
</dbReference>
<dbReference type="SMR" id="A7Z8E8"/>
<dbReference type="GeneID" id="93082087"/>
<dbReference type="KEGG" id="bay:RBAM_029430"/>
<dbReference type="HOGENOM" id="CLU_033144_2_1_9"/>
<dbReference type="Proteomes" id="UP000001120">
    <property type="component" value="Chromosome"/>
</dbReference>
<dbReference type="GO" id="GO:0005737">
    <property type="term" value="C:cytoplasm"/>
    <property type="evidence" value="ECO:0007669"/>
    <property type="project" value="UniProtKB-SubCell"/>
</dbReference>
<dbReference type="GO" id="GO:0051539">
    <property type="term" value="F:4 iron, 4 sulfur cluster binding"/>
    <property type="evidence" value="ECO:0007669"/>
    <property type="project" value="UniProtKB-UniRule"/>
</dbReference>
<dbReference type="GO" id="GO:0016992">
    <property type="term" value="F:lipoate synthase activity"/>
    <property type="evidence" value="ECO:0007669"/>
    <property type="project" value="UniProtKB-UniRule"/>
</dbReference>
<dbReference type="GO" id="GO:0046872">
    <property type="term" value="F:metal ion binding"/>
    <property type="evidence" value="ECO:0007669"/>
    <property type="project" value="UniProtKB-KW"/>
</dbReference>
<dbReference type="CDD" id="cd01335">
    <property type="entry name" value="Radical_SAM"/>
    <property type="match status" value="1"/>
</dbReference>
<dbReference type="FunFam" id="3.20.20.70:FF:000040">
    <property type="entry name" value="Lipoyl synthase"/>
    <property type="match status" value="1"/>
</dbReference>
<dbReference type="Gene3D" id="3.20.20.70">
    <property type="entry name" value="Aldolase class I"/>
    <property type="match status" value="1"/>
</dbReference>
<dbReference type="HAMAP" id="MF_00206">
    <property type="entry name" value="Lipoyl_synth"/>
    <property type="match status" value="1"/>
</dbReference>
<dbReference type="InterPro" id="IPR013785">
    <property type="entry name" value="Aldolase_TIM"/>
</dbReference>
<dbReference type="InterPro" id="IPR006638">
    <property type="entry name" value="Elp3/MiaA/NifB-like_rSAM"/>
</dbReference>
<dbReference type="InterPro" id="IPR031691">
    <property type="entry name" value="LIAS_N"/>
</dbReference>
<dbReference type="InterPro" id="IPR003698">
    <property type="entry name" value="Lipoyl_synth"/>
</dbReference>
<dbReference type="InterPro" id="IPR007197">
    <property type="entry name" value="rSAM"/>
</dbReference>
<dbReference type="NCBIfam" id="TIGR00510">
    <property type="entry name" value="lipA"/>
    <property type="match status" value="1"/>
</dbReference>
<dbReference type="NCBIfam" id="NF004019">
    <property type="entry name" value="PRK05481.1"/>
    <property type="match status" value="1"/>
</dbReference>
<dbReference type="NCBIfam" id="NF009544">
    <property type="entry name" value="PRK12928.1"/>
    <property type="match status" value="1"/>
</dbReference>
<dbReference type="PANTHER" id="PTHR10949">
    <property type="entry name" value="LIPOYL SYNTHASE"/>
    <property type="match status" value="1"/>
</dbReference>
<dbReference type="PANTHER" id="PTHR10949:SF0">
    <property type="entry name" value="LIPOYL SYNTHASE, MITOCHONDRIAL"/>
    <property type="match status" value="1"/>
</dbReference>
<dbReference type="Pfam" id="PF16881">
    <property type="entry name" value="LIAS_N"/>
    <property type="match status" value="1"/>
</dbReference>
<dbReference type="Pfam" id="PF04055">
    <property type="entry name" value="Radical_SAM"/>
    <property type="match status" value="1"/>
</dbReference>
<dbReference type="PIRSF" id="PIRSF005963">
    <property type="entry name" value="Lipoyl_synth"/>
    <property type="match status" value="1"/>
</dbReference>
<dbReference type="SFLD" id="SFLDF00271">
    <property type="entry name" value="lipoyl_synthase"/>
    <property type="match status" value="1"/>
</dbReference>
<dbReference type="SFLD" id="SFLDG01058">
    <property type="entry name" value="lipoyl_synthase_like"/>
    <property type="match status" value="1"/>
</dbReference>
<dbReference type="SMART" id="SM00729">
    <property type="entry name" value="Elp3"/>
    <property type="match status" value="1"/>
</dbReference>
<dbReference type="SUPFAM" id="SSF102114">
    <property type="entry name" value="Radical SAM enzymes"/>
    <property type="match status" value="1"/>
</dbReference>
<dbReference type="PROSITE" id="PS51918">
    <property type="entry name" value="RADICAL_SAM"/>
    <property type="match status" value="1"/>
</dbReference>
<reference key="1">
    <citation type="journal article" date="2007" name="Nat. Biotechnol.">
        <title>Comparative analysis of the complete genome sequence of the plant growth-promoting bacterium Bacillus amyloliquefaciens FZB42.</title>
        <authorList>
            <person name="Chen X.H."/>
            <person name="Koumoutsi A."/>
            <person name="Scholz R."/>
            <person name="Eisenreich A."/>
            <person name="Schneider K."/>
            <person name="Heinemeyer I."/>
            <person name="Morgenstern B."/>
            <person name="Voss B."/>
            <person name="Hess W.R."/>
            <person name="Reva O."/>
            <person name="Junge H."/>
            <person name="Voigt B."/>
            <person name="Jungblut P.R."/>
            <person name="Vater J."/>
            <person name="Suessmuth R."/>
            <person name="Liesegang H."/>
            <person name="Strittmatter A."/>
            <person name="Gottschalk G."/>
            <person name="Borriss R."/>
        </authorList>
    </citation>
    <scope>NUCLEOTIDE SEQUENCE [LARGE SCALE GENOMIC DNA]</scope>
    <source>
        <strain>DSM 23117 / BGSC 10A6 / LMG 26770 / FZB42</strain>
    </source>
</reference>
<feature type="chain" id="PRO_1000012184" description="Lipoyl synthase">
    <location>
        <begin position="1"/>
        <end position="298"/>
    </location>
</feature>
<feature type="domain" description="Radical SAM core" evidence="2">
    <location>
        <begin position="53"/>
        <end position="269"/>
    </location>
</feature>
<feature type="binding site" evidence="1">
    <location>
        <position position="40"/>
    </location>
    <ligand>
        <name>[4Fe-4S] cluster</name>
        <dbReference type="ChEBI" id="CHEBI:49883"/>
        <label>1</label>
    </ligand>
</feature>
<feature type="binding site" evidence="1">
    <location>
        <position position="45"/>
    </location>
    <ligand>
        <name>[4Fe-4S] cluster</name>
        <dbReference type="ChEBI" id="CHEBI:49883"/>
        <label>1</label>
    </ligand>
</feature>
<feature type="binding site" evidence="1">
    <location>
        <position position="51"/>
    </location>
    <ligand>
        <name>[4Fe-4S] cluster</name>
        <dbReference type="ChEBI" id="CHEBI:49883"/>
        <label>1</label>
    </ligand>
</feature>
<feature type="binding site" evidence="1">
    <location>
        <position position="67"/>
    </location>
    <ligand>
        <name>[4Fe-4S] cluster</name>
        <dbReference type="ChEBI" id="CHEBI:49883"/>
        <label>2</label>
        <note>4Fe-4S-S-AdoMet</note>
    </ligand>
</feature>
<feature type="binding site" evidence="1">
    <location>
        <position position="71"/>
    </location>
    <ligand>
        <name>[4Fe-4S] cluster</name>
        <dbReference type="ChEBI" id="CHEBI:49883"/>
        <label>2</label>
        <note>4Fe-4S-S-AdoMet</note>
    </ligand>
</feature>
<feature type="binding site" evidence="1">
    <location>
        <position position="74"/>
    </location>
    <ligand>
        <name>[4Fe-4S] cluster</name>
        <dbReference type="ChEBI" id="CHEBI:49883"/>
        <label>2</label>
        <note>4Fe-4S-S-AdoMet</note>
    </ligand>
</feature>
<feature type="binding site" evidence="1">
    <location>
        <position position="280"/>
    </location>
    <ligand>
        <name>[4Fe-4S] cluster</name>
        <dbReference type="ChEBI" id="CHEBI:49883"/>
        <label>1</label>
    </ligand>
</feature>
<gene>
    <name evidence="1" type="primary">lipA</name>
    <name type="ordered locus">RBAM_029430</name>
</gene>
<sequence>MAKKDEHLRKPEWLKIKLNTNENYTGLKKLMRENNLHTVCEEAKCPNIHECWAVRRTATFMILGSVCTRACRFCAVKTGLPTELDLQEPERVADSVALMNLKHAVITAVARDDQKDGGAGVFAETVRAIRRKSPFTTIEVLPSDMGGNYDNLKTLMDTRPDILNHNIETVRRLTPRVRARATYDRSLEFLRRAKEMQPDIPTKSSIMIGLGETKEEIIEVMDDLLANNVDIMAIGQYLQPSKKHLKVQKYYHPDEFAELKEIAMQKGFSHCEAGPLVRSSYHADEQVNEASKKRQAQA</sequence>
<comment type="function">
    <text evidence="1">Catalyzes the radical-mediated insertion of two sulfur atoms into the C-6 and C-8 positions of the octanoyl moiety bound to the lipoyl domains of lipoate-dependent enzymes, thereby converting the octanoylated domains into lipoylated derivatives.</text>
</comment>
<comment type="catalytic activity">
    <reaction evidence="1">
        <text>[[Fe-S] cluster scaffold protein carrying a second [4Fe-4S](2+) cluster] + N(6)-octanoyl-L-lysyl-[protein] + 2 oxidized [2Fe-2S]-[ferredoxin] + 2 S-adenosyl-L-methionine + 4 H(+) = [[Fe-S] cluster scaffold protein] + N(6)-[(R)-dihydrolipoyl]-L-lysyl-[protein] + 4 Fe(3+) + 2 hydrogen sulfide + 2 5'-deoxyadenosine + 2 L-methionine + 2 reduced [2Fe-2S]-[ferredoxin]</text>
        <dbReference type="Rhea" id="RHEA:16585"/>
        <dbReference type="Rhea" id="RHEA-COMP:9928"/>
        <dbReference type="Rhea" id="RHEA-COMP:10000"/>
        <dbReference type="Rhea" id="RHEA-COMP:10001"/>
        <dbReference type="Rhea" id="RHEA-COMP:10475"/>
        <dbReference type="Rhea" id="RHEA-COMP:14568"/>
        <dbReference type="Rhea" id="RHEA-COMP:14569"/>
        <dbReference type="ChEBI" id="CHEBI:15378"/>
        <dbReference type="ChEBI" id="CHEBI:17319"/>
        <dbReference type="ChEBI" id="CHEBI:29034"/>
        <dbReference type="ChEBI" id="CHEBI:29919"/>
        <dbReference type="ChEBI" id="CHEBI:33722"/>
        <dbReference type="ChEBI" id="CHEBI:33737"/>
        <dbReference type="ChEBI" id="CHEBI:33738"/>
        <dbReference type="ChEBI" id="CHEBI:57844"/>
        <dbReference type="ChEBI" id="CHEBI:59789"/>
        <dbReference type="ChEBI" id="CHEBI:78809"/>
        <dbReference type="ChEBI" id="CHEBI:83100"/>
        <dbReference type="EC" id="2.8.1.8"/>
    </reaction>
</comment>
<comment type="cofactor">
    <cofactor evidence="1">
        <name>[4Fe-4S] cluster</name>
        <dbReference type="ChEBI" id="CHEBI:49883"/>
    </cofactor>
    <text evidence="1">Binds 2 [4Fe-4S] clusters per subunit. One cluster is coordinated with 3 cysteines and an exchangeable S-adenosyl-L-methionine.</text>
</comment>
<comment type="pathway">
    <text evidence="1">Protein modification; protein lipoylation via endogenous pathway; protein N(6)-(lipoyl)lysine from octanoyl-[acyl-carrier-protein].</text>
</comment>
<comment type="subcellular location">
    <subcellularLocation>
        <location evidence="1">Cytoplasm</location>
    </subcellularLocation>
</comment>
<comment type="similarity">
    <text evidence="1">Belongs to the radical SAM superfamily. Lipoyl synthase family.</text>
</comment>
<proteinExistence type="inferred from homology"/>
<protein>
    <recommendedName>
        <fullName evidence="1">Lipoyl synthase</fullName>
        <ecNumber evidence="1">2.8.1.8</ecNumber>
    </recommendedName>
    <alternativeName>
        <fullName evidence="1">Lip-syn</fullName>
        <shortName evidence="1">LS</shortName>
    </alternativeName>
    <alternativeName>
        <fullName evidence="1">Lipoate synthase</fullName>
    </alternativeName>
    <alternativeName>
        <fullName evidence="1">Lipoic acid synthase</fullName>
    </alternativeName>
    <alternativeName>
        <fullName evidence="1">Sulfur insertion protein LipA</fullName>
    </alternativeName>
</protein>